<protein>
    <recommendedName>
        <fullName>Isocitrate dehydrogenase [NADP], mitochondrial</fullName>
        <shortName>IDH</shortName>
        <ecNumber>1.1.1.42</ecNumber>
    </recommendedName>
    <alternativeName>
        <fullName>IDP</fullName>
    </alternativeName>
    <alternativeName>
        <fullName>NADP(+)-specific ICDH</fullName>
    </alternativeName>
    <alternativeName>
        <fullName>Oxalosuccinate decarboxylase</fullName>
    </alternativeName>
</protein>
<dbReference type="EC" id="1.1.1.42"/>
<dbReference type="EMBL" id="AB000262">
    <property type="protein sequence ID" value="BAA19074.1"/>
    <property type="molecule type" value="Genomic_DNA"/>
</dbReference>
<dbReference type="EMBL" id="AB000261">
    <property type="protein sequence ID" value="BAA19073.1"/>
    <property type="molecule type" value="mRNA"/>
</dbReference>
<dbReference type="SMR" id="P79089"/>
<dbReference type="PaxDb" id="5061-CADANGAP00002693"/>
<dbReference type="VEuPathDB" id="FungiDB:An02g12430"/>
<dbReference type="VEuPathDB" id="FungiDB:ASPNIDRAFT2_1175390"/>
<dbReference type="VEuPathDB" id="FungiDB:ATCC64974_52850"/>
<dbReference type="VEuPathDB" id="FungiDB:M747DRAFT_293674"/>
<dbReference type="eggNOG" id="KOG1526">
    <property type="taxonomic scope" value="Eukaryota"/>
</dbReference>
<dbReference type="GO" id="GO:0005739">
    <property type="term" value="C:mitochondrion"/>
    <property type="evidence" value="ECO:0007669"/>
    <property type="project" value="UniProtKB-SubCell"/>
</dbReference>
<dbReference type="GO" id="GO:0004450">
    <property type="term" value="F:isocitrate dehydrogenase (NADP+) activity"/>
    <property type="evidence" value="ECO:0007669"/>
    <property type="project" value="UniProtKB-EC"/>
</dbReference>
<dbReference type="GO" id="GO:0000287">
    <property type="term" value="F:magnesium ion binding"/>
    <property type="evidence" value="ECO:0007669"/>
    <property type="project" value="InterPro"/>
</dbReference>
<dbReference type="GO" id="GO:0051287">
    <property type="term" value="F:NAD binding"/>
    <property type="evidence" value="ECO:0007669"/>
    <property type="project" value="InterPro"/>
</dbReference>
<dbReference type="GO" id="GO:0006097">
    <property type="term" value="P:glyoxylate cycle"/>
    <property type="evidence" value="ECO:0007669"/>
    <property type="project" value="UniProtKB-KW"/>
</dbReference>
<dbReference type="GO" id="GO:0006102">
    <property type="term" value="P:isocitrate metabolic process"/>
    <property type="evidence" value="ECO:0007669"/>
    <property type="project" value="InterPro"/>
</dbReference>
<dbReference type="GO" id="GO:0006739">
    <property type="term" value="P:NADP metabolic process"/>
    <property type="evidence" value="ECO:0007669"/>
    <property type="project" value="TreeGrafter"/>
</dbReference>
<dbReference type="GO" id="GO:0006099">
    <property type="term" value="P:tricarboxylic acid cycle"/>
    <property type="evidence" value="ECO:0007669"/>
    <property type="project" value="UniProtKB-KW"/>
</dbReference>
<dbReference type="FunFam" id="3.40.718.10:FF:000002">
    <property type="entry name" value="Isocitrate dehydrogenase [NADP]"/>
    <property type="match status" value="1"/>
</dbReference>
<dbReference type="Gene3D" id="3.40.718.10">
    <property type="entry name" value="Isopropylmalate Dehydrogenase"/>
    <property type="match status" value="1"/>
</dbReference>
<dbReference type="InterPro" id="IPR019818">
    <property type="entry name" value="IsoCit/isopropylmalate_DH_CS"/>
</dbReference>
<dbReference type="InterPro" id="IPR004790">
    <property type="entry name" value="Isocitrate_DH_NADP"/>
</dbReference>
<dbReference type="InterPro" id="IPR024084">
    <property type="entry name" value="IsoPropMal-DH-like_dom"/>
</dbReference>
<dbReference type="NCBIfam" id="TIGR00127">
    <property type="entry name" value="nadp_idh_euk"/>
    <property type="match status" value="1"/>
</dbReference>
<dbReference type="NCBIfam" id="NF006156">
    <property type="entry name" value="PRK08299.1"/>
    <property type="match status" value="1"/>
</dbReference>
<dbReference type="PANTHER" id="PTHR11822:SF21">
    <property type="entry name" value="ISOCITRATE DEHYDROGENASE [NADP], MITOCHONDRIAL"/>
    <property type="match status" value="1"/>
</dbReference>
<dbReference type="PANTHER" id="PTHR11822">
    <property type="entry name" value="NADP-SPECIFIC ISOCITRATE DEHYDROGENASE"/>
    <property type="match status" value="1"/>
</dbReference>
<dbReference type="Pfam" id="PF00180">
    <property type="entry name" value="Iso_dh"/>
    <property type="match status" value="1"/>
</dbReference>
<dbReference type="PIRSF" id="PIRSF000108">
    <property type="entry name" value="IDH_NADP"/>
    <property type="match status" value="1"/>
</dbReference>
<dbReference type="SMART" id="SM01329">
    <property type="entry name" value="Iso_dh"/>
    <property type="match status" value="1"/>
</dbReference>
<dbReference type="SUPFAM" id="SSF53659">
    <property type="entry name" value="Isocitrate/Isopropylmalate dehydrogenase-like"/>
    <property type="match status" value="1"/>
</dbReference>
<dbReference type="PROSITE" id="PS00470">
    <property type="entry name" value="IDH_IMDH"/>
    <property type="match status" value="1"/>
</dbReference>
<organism>
    <name type="scientific">Aspergillus niger</name>
    <dbReference type="NCBI Taxonomy" id="5061"/>
    <lineage>
        <taxon>Eukaryota</taxon>
        <taxon>Fungi</taxon>
        <taxon>Dikarya</taxon>
        <taxon>Ascomycota</taxon>
        <taxon>Pezizomycotina</taxon>
        <taxon>Eurotiomycetes</taxon>
        <taxon>Eurotiomycetidae</taxon>
        <taxon>Eurotiales</taxon>
        <taxon>Aspergillaceae</taxon>
        <taxon>Aspergillus</taxon>
        <taxon>Aspergillus subgen. Circumdati</taxon>
    </lineage>
</organism>
<proteinExistence type="evidence at transcript level"/>
<name>IDHP_ASPNG</name>
<reference key="1">
    <citation type="journal article" date="2002" name="J. Biosci. Bioeng.">
        <title>Cloning and expression of Aspergillus niger icdA gene encoding mitochondrial NADP+-specific isocitrate dehydrogenase.</title>
        <authorList>
            <person name="Kirimura K."/>
            <person name="Yoda M."/>
            <person name="Kumagai M."/>
            <person name="Ishii Y."/>
            <person name="Kino K."/>
            <person name="Usami S."/>
        </authorList>
    </citation>
    <scope>NUCLEOTIDE SEQUENCE [GENOMIC DNA / MRNA]</scope>
    <source>
        <strain>WU-2223L</strain>
    </source>
</reference>
<accession>P79089</accession>
<gene>
    <name type="primary">icdA</name>
</gene>
<evidence type="ECO:0000250" key="1"/>
<evidence type="ECO:0000305" key="2"/>
<comment type="catalytic activity">
    <reaction>
        <text>D-threo-isocitrate + NADP(+) = 2-oxoglutarate + CO2 + NADPH</text>
        <dbReference type="Rhea" id="RHEA:19629"/>
        <dbReference type="ChEBI" id="CHEBI:15562"/>
        <dbReference type="ChEBI" id="CHEBI:16526"/>
        <dbReference type="ChEBI" id="CHEBI:16810"/>
        <dbReference type="ChEBI" id="CHEBI:57783"/>
        <dbReference type="ChEBI" id="CHEBI:58349"/>
        <dbReference type="EC" id="1.1.1.42"/>
    </reaction>
</comment>
<comment type="cofactor">
    <cofactor evidence="1">
        <name>Mg(2+)</name>
        <dbReference type="ChEBI" id="CHEBI:18420"/>
    </cofactor>
    <cofactor evidence="1">
        <name>Mn(2+)</name>
        <dbReference type="ChEBI" id="CHEBI:29035"/>
    </cofactor>
    <text evidence="1">Binds 1 Mg(2+) or Mn(2+) ion per subunit.</text>
</comment>
<comment type="subcellular location">
    <subcellularLocation>
        <location>Mitochondrion</location>
    </subcellularLocation>
</comment>
<comment type="similarity">
    <text evidence="2">Belongs to the isocitrate and isopropylmalate dehydrogenases family.</text>
</comment>
<sequence>MSSVRFSSALARRSFAVASPPLSAPLSSSARRFLSSSSSTISSSSSSVSTRSPRSLTSASSLLSSRTASARWTGLSSLNLTQSRTMATEIPKIKVKNPVVELDGDEMTRIIWQEIREKLILPYLDVDLKYYDLGLEYRDQTDDQVTVEAAEAIKKYGVGVKCATITPDEARVEEFKLKKMWLSPNGTIRNILGGTVFREPIIIPAIPRLVPGWNKPIIIGRHAFGDQYRATDRVIPGPGKLELVYTPVNGEPETVKVYDFQGGGIAQTQYNTDESIRGFAHASFQMALLKGLPLYMSTKNTILKRYDGRFKDIFQEIYESTYQKDFEAKNLWYEHRLIDDMVAQMIKSEGGFVMALKNYDGDVQSDIVAQGFGSLGLMTSTLVTPTGEAFESEAAHGTVTRHYREHQKGRETSTNPIASIFAWTRGLIQRGKLDETPDVVTFAEELERACIEVVNDEGIMTKDLALACGRKEREAWVTTREYMAAVERRLKANLKSRL</sequence>
<keyword id="KW-0329">Glyoxylate bypass</keyword>
<keyword id="KW-0460">Magnesium</keyword>
<keyword id="KW-0464">Manganese</keyword>
<keyword id="KW-0479">Metal-binding</keyword>
<keyword id="KW-0496">Mitochondrion</keyword>
<keyword id="KW-0521">NADP</keyword>
<keyword id="KW-0560">Oxidoreductase</keyword>
<keyword id="KW-0809">Transit peptide</keyword>
<keyword id="KW-0816">Tricarboxylic acid cycle</keyword>
<feature type="transit peptide" description="Mitochondrion">
    <location>
        <begin position="1"/>
        <end status="unknown"/>
    </location>
</feature>
<feature type="chain" id="PRO_0000014423" description="Isocitrate dehydrogenase [NADP], mitochondrial">
    <location>
        <begin status="unknown"/>
        <end position="498"/>
    </location>
</feature>
<feature type="binding site" evidence="1">
    <location>
        <begin position="164"/>
        <end position="166"/>
    </location>
    <ligand>
        <name>NADP(+)</name>
        <dbReference type="ChEBI" id="CHEBI:58349"/>
    </ligand>
</feature>
<feature type="binding site" evidence="1">
    <location>
        <position position="166"/>
    </location>
    <ligand>
        <name>substrate</name>
    </ligand>
</feature>
<feature type="binding site" evidence="1">
    <location>
        <position position="171"/>
    </location>
    <ligand>
        <name>NADP(+)</name>
        <dbReference type="ChEBI" id="CHEBI:58349"/>
    </ligand>
</feature>
<feature type="binding site" evidence="1">
    <location>
        <begin position="183"/>
        <end position="189"/>
    </location>
    <ligand>
        <name>substrate</name>
    </ligand>
</feature>
<feature type="binding site" evidence="1">
    <location>
        <position position="198"/>
    </location>
    <ligand>
        <name>substrate</name>
    </ligand>
</feature>
<feature type="binding site" evidence="1">
    <location>
        <position position="221"/>
    </location>
    <ligand>
        <name>substrate</name>
    </ligand>
</feature>
<feature type="binding site" evidence="1">
    <location>
        <position position="339"/>
    </location>
    <ligand>
        <name>Mn(2+)</name>
        <dbReference type="ChEBI" id="CHEBI:29035"/>
    </ligand>
</feature>
<feature type="binding site" evidence="1">
    <location>
        <position position="347"/>
    </location>
    <ligand>
        <name>NADP(+)</name>
        <dbReference type="ChEBI" id="CHEBI:58349"/>
    </ligand>
</feature>
<feature type="binding site" evidence="1">
    <location>
        <position position="362"/>
    </location>
    <ligand>
        <name>Mn(2+)</name>
        <dbReference type="ChEBI" id="CHEBI:29035"/>
    </ligand>
</feature>
<feature type="binding site" evidence="1">
    <location>
        <begin position="397"/>
        <end position="402"/>
    </location>
    <ligand>
        <name>NADP(+)</name>
        <dbReference type="ChEBI" id="CHEBI:58349"/>
    </ligand>
</feature>
<feature type="binding site" evidence="1">
    <location>
        <position position="415"/>
    </location>
    <ligand>
        <name>NADP(+)</name>
        <dbReference type="ChEBI" id="CHEBI:58349"/>
    </ligand>
</feature>
<feature type="site" description="Critical for catalysis" evidence="1">
    <location>
        <position position="228"/>
    </location>
</feature>
<feature type="site" description="Critical for catalysis" evidence="1">
    <location>
        <position position="299"/>
    </location>
</feature>